<dbReference type="EMBL" id="HQ873433">
    <property type="protein sequence ID" value="ADX87418.1"/>
    <property type="molecule type" value="mRNA"/>
</dbReference>
<dbReference type="SMR" id="F1DLK1"/>
<dbReference type="GO" id="GO:0005737">
    <property type="term" value="C:cytoplasm"/>
    <property type="evidence" value="ECO:0000250"/>
    <property type="project" value="UniProtKB"/>
</dbReference>
<dbReference type="GO" id="GO:0005634">
    <property type="term" value="C:nucleus"/>
    <property type="evidence" value="ECO:0000250"/>
    <property type="project" value="UniProtKB"/>
</dbReference>
<dbReference type="GO" id="GO:0006974">
    <property type="term" value="P:DNA damage response"/>
    <property type="evidence" value="ECO:0000250"/>
    <property type="project" value="UniProtKB"/>
</dbReference>
<dbReference type="GO" id="GO:0048481">
    <property type="term" value="P:plant ovule development"/>
    <property type="evidence" value="ECO:0000250"/>
    <property type="project" value="UniProtKB"/>
</dbReference>
<dbReference type="GO" id="GO:0009663">
    <property type="term" value="P:plasmodesma organization"/>
    <property type="evidence" value="ECO:0000250"/>
    <property type="project" value="UniProtKB"/>
</dbReference>
<dbReference type="GO" id="GO:0010497">
    <property type="term" value="P:plasmodesmata-mediated intercellular transport"/>
    <property type="evidence" value="ECO:0000315"/>
    <property type="project" value="UniProtKB"/>
</dbReference>
<dbReference type="GO" id="GO:0009555">
    <property type="term" value="P:pollen development"/>
    <property type="evidence" value="ECO:0000250"/>
    <property type="project" value="UniProtKB"/>
</dbReference>
<dbReference type="GO" id="GO:0051726">
    <property type="term" value="P:regulation of cell cycle"/>
    <property type="evidence" value="ECO:0000250"/>
    <property type="project" value="UniProtKB"/>
</dbReference>
<dbReference type="GO" id="GO:0006282">
    <property type="term" value="P:regulation of DNA repair"/>
    <property type="evidence" value="ECO:0000250"/>
    <property type="project" value="UniProtKB"/>
</dbReference>
<dbReference type="GO" id="GO:0010044">
    <property type="term" value="P:response to aluminum ion"/>
    <property type="evidence" value="ECO:0000250"/>
    <property type="project" value="UniProtKB"/>
</dbReference>
<dbReference type="FunFam" id="2.130.10.10:FF:003591">
    <property type="entry name" value="Protein DECREASED SIZE EXCLUSION LIMIT 1"/>
    <property type="match status" value="1"/>
</dbReference>
<dbReference type="Gene3D" id="2.130.10.10">
    <property type="entry name" value="YVTN repeat-like/Quinoprotein amine dehydrogenase"/>
    <property type="match status" value="2"/>
</dbReference>
<dbReference type="InterPro" id="IPR020472">
    <property type="entry name" value="G-protein_beta_WD-40_rep"/>
</dbReference>
<dbReference type="InterPro" id="IPR015943">
    <property type="entry name" value="WD40/YVTN_repeat-like_dom_sf"/>
</dbReference>
<dbReference type="InterPro" id="IPR019775">
    <property type="entry name" value="WD40_repeat_CS"/>
</dbReference>
<dbReference type="InterPro" id="IPR036322">
    <property type="entry name" value="WD40_repeat_dom_sf"/>
</dbReference>
<dbReference type="InterPro" id="IPR001680">
    <property type="entry name" value="WD40_rpt"/>
</dbReference>
<dbReference type="PANTHER" id="PTHR19854:SF1">
    <property type="entry name" value="GUANINE NUCLEOTIDE-BINDING PROTEIN SUBUNIT BETA-LIKE PROTEIN 1"/>
    <property type="match status" value="1"/>
</dbReference>
<dbReference type="PANTHER" id="PTHR19854">
    <property type="entry name" value="TRANSDUCIN BETA-LIKE 3"/>
    <property type="match status" value="1"/>
</dbReference>
<dbReference type="Pfam" id="PF00400">
    <property type="entry name" value="WD40"/>
    <property type="match status" value="3"/>
</dbReference>
<dbReference type="PRINTS" id="PR00320">
    <property type="entry name" value="GPROTEINBRPT"/>
</dbReference>
<dbReference type="SMART" id="SM00320">
    <property type="entry name" value="WD40"/>
    <property type="match status" value="5"/>
</dbReference>
<dbReference type="SUPFAM" id="SSF50978">
    <property type="entry name" value="WD40 repeat-like"/>
    <property type="match status" value="1"/>
</dbReference>
<dbReference type="PROSITE" id="PS00678">
    <property type="entry name" value="WD_REPEATS_1"/>
    <property type="match status" value="2"/>
</dbReference>
<dbReference type="PROSITE" id="PS50082">
    <property type="entry name" value="WD_REPEATS_2"/>
    <property type="match status" value="2"/>
</dbReference>
<dbReference type="PROSITE" id="PS50294">
    <property type="entry name" value="WD_REPEATS_REGION"/>
    <property type="match status" value="1"/>
</dbReference>
<reference key="1">
    <citation type="journal article" date="2012" name="Proc. Natl. Acad. Sci. U.S.A.">
        <title>Plasmodesmata formation and cell-to-cell transport are reduced in decreased size exclusion limit 1 during embryogenesis in Arabidopsis.</title>
        <authorList>
            <person name="Xu M."/>
            <person name="Cho E."/>
            <person name="Burch-Smith T.M."/>
            <person name="Zambryski P.C."/>
        </authorList>
    </citation>
    <scope>NUCLEOTIDE SEQUENCE [MRNA]</scope>
    <scope>FUNCTION</scope>
    <scope>DISRUPTION PHENOTYPE</scope>
</reference>
<feature type="chain" id="PRO_0000432851" description="Protein DECREASED SIZE EXCLUSION LIMIT 1">
    <location>
        <begin position="1"/>
        <end position="375"/>
    </location>
</feature>
<feature type="repeat" description="WD 1" evidence="2">
    <location>
        <begin position="15"/>
        <end position="54"/>
    </location>
</feature>
<feature type="repeat" description="WD 2" evidence="2">
    <location>
        <begin position="59"/>
        <end position="100"/>
    </location>
</feature>
<feature type="repeat" description="WD 3" evidence="2">
    <location>
        <begin position="144"/>
        <end position="189"/>
    </location>
</feature>
<feature type="repeat" description="WD 4" evidence="2">
    <location>
        <begin position="203"/>
        <end position="247"/>
    </location>
</feature>
<feature type="repeat" description="WD 5" evidence="2">
    <location>
        <begin position="251"/>
        <end position="290"/>
    </location>
</feature>
<feature type="repeat" description="WD 6" evidence="2">
    <location>
        <begin position="297"/>
        <end position="338"/>
    </location>
</feature>
<feature type="repeat" description="WD 7" evidence="2">
    <location>
        <begin position="339"/>
        <end position="375"/>
    </location>
</feature>
<sequence length="375" mass="40588">MSKRPAPDPVSVLRGHRASVADICFHPSNSILFSGSTDGELRIWNTVQYRTVSSAWVHSAAHGIICVAASPVLGDNKVISQGRDGTVKCWDFGGGGLSRTPLLTIKTNSYHFCKLSIAKSPSEAMKIDDLEVNEIVDGMQREEQGDQPTDSIKFKGKELIEGPKYVAIAGEQASVVEIWDVNTAERIAQLPHSSGSPSNQTPNQRGMCMAVQAFLPSESQGLLSIMAGYEDGSIAWWDLRNLGVPLTSVKFHSEPVLSLCIDGSCKGGLSGAADEKILMFALDHSMGSCLIRKEIVLERPGIAGTSIRPDGKIAATAGWDHRVRIYNYRKGKPLAILKYHNATCNTVSFSADSKLLASASEDTTVALWELYLPRT</sequence>
<comment type="function">
    <text evidence="1 3">Involved in the formation of X-, Y-shaped and twinned plasmodesmata (PD), thus modelating PD size exclusion limit and regulating cell-to-cell transport (PubMed:22411811). Cell cycle checkpoint regulator that monitors and responds to DNA damage such as DNA cross-links, and triggers the halt of the cell cycle progression in the presence of DNA cross-linking agents. Mediates the active process of aluminum- (Al) dependent root growth inhibition and thus is required for response to Al toxicity. Essential for signal transduction and development of both male and female organs (By similarity).</text>
</comment>
<comment type="subcellular location">
    <subcellularLocation>
        <location evidence="1">Cytoplasm</location>
    </subcellularLocation>
    <subcellularLocation>
        <location evidence="1">Nucleus</location>
    </subcellularLocation>
</comment>
<comment type="disruption phenotype">
    <text evidence="3">Reduced plasmodesmata (PD)-mediated horizontal and vertical cell-to-cell transport in leaves.</text>
</comment>
<comment type="similarity">
    <text evidence="5">Belongs to the plant DSE1 protein family.</text>
</comment>
<protein>
    <recommendedName>
        <fullName evidence="4">Protein DECREASED SIZE EXCLUSION LIMIT 1</fullName>
        <shortName evidence="4">NbDSE1</shortName>
    </recommendedName>
</protein>
<gene>
    <name evidence="4" type="primary">DSE1</name>
</gene>
<name>DSE1_NICBE</name>
<accession>F1DLK1</accession>
<keyword id="KW-0131">Cell cycle</keyword>
<keyword id="KW-0963">Cytoplasm</keyword>
<keyword id="KW-0217">Developmental protein</keyword>
<keyword id="KW-0227">DNA damage</keyword>
<keyword id="KW-0539">Nucleus</keyword>
<keyword id="KW-0677">Repeat</keyword>
<keyword id="KW-0853">WD repeat</keyword>
<organism evidence="6">
    <name type="scientific">Nicotiana benthamiana</name>
    <dbReference type="NCBI Taxonomy" id="4100"/>
    <lineage>
        <taxon>Eukaryota</taxon>
        <taxon>Viridiplantae</taxon>
        <taxon>Streptophyta</taxon>
        <taxon>Embryophyta</taxon>
        <taxon>Tracheophyta</taxon>
        <taxon>Spermatophyta</taxon>
        <taxon>Magnoliopsida</taxon>
        <taxon>eudicotyledons</taxon>
        <taxon>Gunneridae</taxon>
        <taxon>Pentapetalae</taxon>
        <taxon>asterids</taxon>
        <taxon>lamiids</taxon>
        <taxon>Solanales</taxon>
        <taxon>Solanaceae</taxon>
        <taxon>Nicotianoideae</taxon>
        <taxon>Nicotianeae</taxon>
        <taxon>Nicotiana</taxon>
    </lineage>
</organism>
<proteinExistence type="evidence at transcript level"/>
<evidence type="ECO:0000250" key="1">
    <source>
        <dbReference type="UniProtKB" id="Q3MV14"/>
    </source>
</evidence>
<evidence type="ECO:0000255" key="2"/>
<evidence type="ECO:0000269" key="3">
    <source>
    </source>
</evidence>
<evidence type="ECO:0000303" key="4">
    <source>
    </source>
</evidence>
<evidence type="ECO:0000305" key="5"/>
<evidence type="ECO:0000312" key="6">
    <source>
        <dbReference type="EMBL" id="ADX87418.1"/>
    </source>
</evidence>